<keyword id="KW-0150">Chloroplast</keyword>
<keyword id="KW-0934">Plastid</keyword>
<keyword id="KW-0687">Ribonucleoprotein</keyword>
<keyword id="KW-0689">Ribosomal protein</keyword>
<keyword id="KW-0694">RNA-binding</keyword>
<keyword id="KW-0699">rRNA-binding</keyword>
<gene>
    <name type="primary">rps18</name>
</gene>
<protein>
    <recommendedName>
        <fullName evidence="1">Small ribosomal subunit protein bS18c</fullName>
    </recommendedName>
    <alternativeName>
        <fullName>30S ribosomal protein S18, chloroplastic</fullName>
    </alternativeName>
</protein>
<sequence>MDKSKRLFVKSKQSIRRSSPLIQSGDRIDYKNLSLLFKFISRQGKILSRRVNKLTLKQQRLITIAIKQARILSLLPFVNSSSFVNNAKKKYEKRKSITRTRTPVLKKKKK</sequence>
<accession>P49169</accession>
<reference key="1">
    <citation type="journal article" date="1995" name="Biochem. Mol. Biol. Int.">
        <title>Evolution of the NH2- and COOH-terminal extensions of chloroplast ribosomal protein S18. Nucleotide sequence of pea and rye chloroplast rps 18 genes.</title>
        <authorList>
            <person name="Wegloehner W."/>
            <person name="Kauschmann A."/>
            <person name="Subramanian A.R."/>
        </authorList>
    </citation>
    <scope>NUCLEOTIDE SEQUENCE [MRNA]</scope>
    <source>
        <tissue>Leaf</tissue>
    </source>
</reference>
<organism>
    <name type="scientific">Pisum sativum</name>
    <name type="common">Garden pea</name>
    <name type="synonym">Lathyrus oleraceus</name>
    <dbReference type="NCBI Taxonomy" id="3888"/>
    <lineage>
        <taxon>Eukaryota</taxon>
        <taxon>Viridiplantae</taxon>
        <taxon>Streptophyta</taxon>
        <taxon>Embryophyta</taxon>
        <taxon>Tracheophyta</taxon>
        <taxon>Spermatophyta</taxon>
        <taxon>Magnoliopsida</taxon>
        <taxon>eudicotyledons</taxon>
        <taxon>Gunneridae</taxon>
        <taxon>Pentapetalae</taxon>
        <taxon>rosids</taxon>
        <taxon>fabids</taxon>
        <taxon>Fabales</taxon>
        <taxon>Fabaceae</taxon>
        <taxon>Papilionoideae</taxon>
        <taxon>50 kb inversion clade</taxon>
        <taxon>NPAAA clade</taxon>
        <taxon>Hologalegina</taxon>
        <taxon>IRL clade</taxon>
        <taxon>Fabeae</taxon>
        <taxon>Pisum</taxon>
    </lineage>
</organism>
<evidence type="ECO:0000305" key="1"/>
<comment type="subunit">
    <text>Part of the 30S ribosomal subunit.</text>
</comment>
<comment type="subcellular location">
    <subcellularLocation>
        <location>Plastid</location>
        <location>Chloroplast</location>
    </subcellularLocation>
</comment>
<comment type="similarity">
    <text evidence="1">Belongs to the bacterial ribosomal protein bS18 family.</text>
</comment>
<proteinExistence type="inferred from homology"/>
<dbReference type="EMBL" id="X82511">
    <property type="protein sequence ID" value="CAA57885.1"/>
    <property type="molecule type" value="mRNA"/>
</dbReference>
<dbReference type="PIR" id="S61540">
    <property type="entry name" value="S61540"/>
</dbReference>
<dbReference type="SMR" id="P49169"/>
<dbReference type="GO" id="GO:0009507">
    <property type="term" value="C:chloroplast"/>
    <property type="evidence" value="ECO:0007669"/>
    <property type="project" value="UniProtKB-SubCell"/>
</dbReference>
<dbReference type="GO" id="GO:0005763">
    <property type="term" value="C:mitochondrial small ribosomal subunit"/>
    <property type="evidence" value="ECO:0007669"/>
    <property type="project" value="TreeGrafter"/>
</dbReference>
<dbReference type="GO" id="GO:0070181">
    <property type="term" value="F:small ribosomal subunit rRNA binding"/>
    <property type="evidence" value="ECO:0007669"/>
    <property type="project" value="TreeGrafter"/>
</dbReference>
<dbReference type="GO" id="GO:0003735">
    <property type="term" value="F:structural constituent of ribosome"/>
    <property type="evidence" value="ECO:0007669"/>
    <property type="project" value="InterPro"/>
</dbReference>
<dbReference type="GO" id="GO:0006412">
    <property type="term" value="P:translation"/>
    <property type="evidence" value="ECO:0007669"/>
    <property type="project" value="UniProtKB-UniRule"/>
</dbReference>
<dbReference type="FunFam" id="4.10.640.10:FF:000002">
    <property type="entry name" value="30S ribosomal protein S18, chloroplastic"/>
    <property type="match status" value="1"/>
</dbReference>
<dbReference type="Gene3D" id="4.10.640.10">
    <property type="entry name" value="Ribosomal protein S18"/>
    <property type="match status" value="1"/>
</dbReference>
<dbReference type="HAMAP" id="MF_00270">
    <property type="entry name" value="Ribosomal_bS18"/>
    <property type="match status" value="1"/>
</dbReference>
<dbReference type="InterPro" id="IPR001648">
    <property type="entry name" value="Ribosomal_bS18"/>
</dbReference>
<dbReference type="InterPro" id="IPR018275">
    <property type="entry name" value="Ribosomal_bS18_CS"/>
</dbReference>
<dbReference type="InterPro" id="IPR036870">
    <property type="entry name" value="Ribosomal_bS18_sf"/>
</dbReference>
<dbReference type="NCBIfam" id="TIGR00165">
    <property type="entry name" value="S18"/>
    <property type="match status" value="1"/>
</dbReference>
<dbReference type="PANTHER" id="PTHR13479">
    <property type="entry name" value="30S RIBOSOMAL PROTEIN S18"/>
    <property type="match status" value="1"/>
</dbReference>
<dbReference type="PANTHER" id="PTHR13479:SF40">
    <property type="entry name" value="SMALL RIBOSOMAL SUBUNIT PROTEIN BS18M"/>
    <property type="match status" value="1"/>
</dbReference>
<dbReference type="Pfam" id="PF01084">
    <property type="entry name" value="Ribosomal_S18"/>
    <property type="match status" value="1"/>
</dbReference>
<dbReference type="PRINTS" id="PR00974">
    <property type="entry name" value="RIBOSOMALS18"/>
</dbReference>
<dbReference type="SUPFAM" id="SSF46911">
    <property type="entry name" value="Ribosomal protein S18"/>
    <property type="match status" value="1"/>
</dbReference>
<dbReference type="PROSITE" id="PS00057">
    <property type="entry name" value="RIBOSOMAL_S18"/>
    <property type="match status" value="1"/>
</dbReference>
<name>RR18_PEA</name>
<feature type="chain" id="PRO_0000111302" description="Small ribosomal subunit protein bS18c">
    <location>
        <begin position="1"/>
        <end position="110"/>
    </location>
</feature>
<geneLocation type="chloroplast"/>